<evidence type="ECO:0000255" key="1">
    <source>
        <dbReference type="PROSITE-ProRule" id="PRU00169"/>
    </source>
</evidence>
<evidence type="ECO:0000255" key="2">
    <source>
        <dbReference type="PROSITE-ProRule" id="PRU00411"/>
    </source>
</evidence>
<proteinExistence type="inferred from homology"/>
<name>NARP_HAEIN</name>
<reference key="1">
    <citation type="journal article" date="1995" name="Science">
        <title>Whole-genome random sequencing and assembly of Haemophilus influenzae Rd.</title>
        <authorList>
            <person name="Fleischmann R.D."/>
            <person name="Adams M.D."/>
            <person name="White O."/>
            <person name="Clayton R.A."/>
            <person name="Kirkness E.F."/>
            <person name="Kerlavage A.R."/>
            <person name="Bult C.J."/>
            <person name="Tomb J.-F."/>
            <person name="Dougherty B.A."/>
            <person name="Merrick J.M."/>
            <person name="McKenney K."/>
            <person name="Sutton G.G."/>
            <person name="FitzHugh W."/>
            <person name="Fields C.A."/>
            <person name="Gocayne J.D."/>
            <person name="Scott J.D."/>
            <person name="Shirley R."/>
            <person name="Liu L.-I."/>
            <person name="Glodek A."/>
            <person name="Kelley J.M."/>
            <person name="Weidman J.F."/>
            <person name="Phillips C.A."/>
            <person name="Spriggs T."/>
            <person name="Hedblom E."/>
            <person name="Cotton M.D."/>
            <person name="Utterback T.R."/>
            <person name="Hanna M.C."/>
            <person name="Nguyen D.T."/>
            <person name="Saudek D.M."/>
            <person name="Brandon R.C."/>
            <person name="Fine L.D."/>
            <person name="Fritchman J.L."/>
            <person name="Fuhrmann J.L."/>
            <person name="Geoghagen N.S.M."/>
            <person name="Gnehm C.L."/>
            <person name="McDonald L.A."/>
            <person name="Small K.V."/>
            <person name="Fraser C.M."/>
            <person name="Smith H.O."/>
            <person name="Venter J.C."/>
        </authorList>
    </citation>
    <scope>NUCLEOTIDE SEQUENCE [LARGE SCALE GENOMIC DNA]</scope>
    <source>
        <strain>ATCC 51907 / DSM 11121 / KW20 / Rd</strain>
    </source>
</reference>
<organism>
    <name type="scientific">Haemophilus influenzae (strain ATCC 51907 / DSM 11121 / KW20 / Rd)</name>
    <dbReference type="NCBI Taxonomy" id="71421"/>
    <lineage>
        <taxon>Bacteria</taxon>
        <taxon>Pseudomonadati</taxon>
        <taxon>Pseudomonadota</taxon>
        <taxon>Gammaproteobacteria</taxon>
        <taxon>Pasteurellales</taxon>
        <taxon>Pasteurellaceae</taxon>
        <taxon>Haemophilus</taxon>
    </lineage>
</organism>
<comment type="function">
    <text>Could activate the expression of a formate dehydrogenase operon and could repress the transcription of the fumarate reductase (frdABCD) operon.</text>
</comment>
<gene>
    <name type="primary">narP</name>
    <name type="ordered locus">HI_0726</name>
</gene>
<feature type="chain" id="PRO_0000081150" description="Nitrate/nitrite response regulator protein homolog">
    <location>
        <begin position="1"/>
        <end position="208"/>
    </location>
</feature>
<feature type="domain" description="Response regulatory" evidence="1">
    <location>
        <begin position="6"/>
        <end position="122"/>
    </location>
</feature>
<feature type="domain" description="HTH luxR-type" evidence="2">
    <location>
        <begin position="142"/>
        <end position="207"/>
    </location>
</feature>
<feature type="DNA-binding region" description="H-T-H motif" evidence="2">
    <location>
        <begin position="166"/>
        <end position="185"/>
    </location>
</feature>
<feature type="modified residue" description="4-aspartylphosphate" evidence="1">
    <location>
        <position position="57"/>
    </location>
</feature>
<dbReference type="EMBL" id="L42023">
    <property type="protein sequence ID" value="AAC22384.1"/>
    <property type="molecule type" value="Genomic_DNA"/>
</dbReference>
<dbReference type="PIR" id="A64089">
    <property type="entry name" value="A64089"/>
</dbReference>
<dbReference type="RefSeq" id="NP_438884.1">
    <property type="nucleotide sequence ID" value="NC_000907.1"/>
</dbReference>
<dbReference type="SMR" id="P44845"/>
<dbReference type="STRING" id="71421.HI_0726"/>
<dbReference type="EnsemblBacteria" id="AAC22384">
    <property type="protein sequence ID" value="AAC22384"/>
    <property type="gene ID" value="HI_0726"/>
</dbReference>
<dbReference type="KEGG" id="hin:HI_0726"/>
<dbReference type="PATRIC" id="fig|71421.8.peg.758"/>
<dbReference type="eggNOG" id="COG2197">
    <property type="taxonomic scope" value="Bacteria"/>
</dbReference>
<dbReference type="HOGENOM" id="CLU_000445_90_10_6"/>
<dbReference type="OrthoDB" id="9796655at2"/>
<dbReference type="PhylomeDB" id="P44845"/>
<dbReference type="BioCyc" id="HINF71421:G1GJ1-765-MONOMER"/>
<dbReference type="Proteomes" id="UP000000579">
    <property type="component" value="Chromosome"/>
</dbReference>
<dbReference type="GO" id="GO:0005524">
    <property type="term" value="F:ATP binding"/>
    <property type="evidence" value="ECO:0007669"/>
    <property type="project" value="UniProtKB-KW"/>
</dbReference>
<dbReference type="GO" id="GO:0003677">
    <property type="term" value="F:DNA binding"/>
    <property type="evidence" value="ECO:0007669"/>
    <property type="project" value="UniProtKB-KW"/>
</dbReference>
<dbReference type="GO" id="GO:0000160">
    <property type="term" value="P:phosphorelay signal transduction system"/>
    <property type="evidence" value="ECO:0007669"/>
    <property type="project" value="UniProtKB-KW"/>
</dbReference>
<dbReference type="GO" id="GO:0006355">
    <property type="term" value="P:regulation of DNA-templated transcription"/>
    <property type="evidence" value="ECO:0007669"/>
    <property type="project" value="InterPro"/>
</dbReference>
<dbReference type="CDD" id="cd06170">
    <property type="entry name" value="LuxR_C_like"/>
    <property type="match status" value="1"/>
</dbReference>
<dbReference type="CDD" id="cd19931">
    <property type="entry name" value="REC_NarL"/>
    <property type="match status" value="1"/>
</dbReference>
<dbReference type="Gene3D" id="3.40.50.2300">
    <property type="match status" value="1"/>
</dbReference>
<dbReference type="InterPro" id="IPR011006">
    <property type="entry name" value="CheY-like_superfamily"/>
</dbReference>
<dbReference type="InterPro" id="IPR016032">
    <property type="entry name" value="Sig_transdc_resp-reg_C-effctor"/>
</dbReference>
<dbReference type="InterPro" id="IPR001789">
    <property type="entry name" value="Sig_transdc_resp-reg_receiver"/>
</dbReference>
<dbReference type="InterPro" id="IPR000792">
    <property type="entry name" value="Tscrpt_reg_LuxR_C"/>
</dbReference>
<dbReference type="InterPro" id="IPR039420">
    <property type="entry name" value="WalR-like"/>
</dbReference>
<dbReference type="PANTHER" id="PTHR43214:SF41">
    <property type="entry name" value="NITRATE_NITRITE RESPONSE REGULATOR PROTEIN NARP"/>
    <property type="match status" value="1"/>
</dbReference>
<dbReference type="PANTHER" id="PTHR43214">
    <property type="entry name" value="TWO-COMPONENT RESPONSE REGULATOR"/>
    <property type="match status" value="1"/>
</dbReference>
<dbReference type="Pfam" id="PF00196">
    <property type="entry name" value="GerE"/>
    <property type="match status" value="1"/>
</dbReference>
<dbReference type="Pfam" id="PF00072">
    <property type="entry name" value="Response_reg"/>
    <property type="match status" value="1"/>
</dbReference>
<dbReference type="PRINTS" id="PR00038">
    <property type="entry name" value="HTHLUXR"/>
</dbReference>
<dbReference type="SMART" id="SM00421">
    <property type="entry name" value="HTH_LUXR"/>
    <property type="match status" value="1"/>
</dbReference>
<dbReference type="SMART" id="SM00448">
    <property type="entry name" value="REC"/>
    <property type="match status" value="1"/>
</dbReference>
<dbReference type="SUPFAM" id="SSF46894">
    <property type="entry name" value="C-terminal effector domain of the bipartite response regulators"/>
    <property type="match status" value="1"/>
</dbReference>
<dbReference type="SUPFAM" id="SSF52172">
    <property type="entry name" value="CheY-like"/>
    <property type="match status" value="1"/>
</dbReference>
<dbReference type="PROSITE" id="PS00622">
    <property type="entry name" value="HTH_LUXR_1"/>
    <property type="match status" value="1"/>
</dbReference>
<dbReference type="PROSITE" id="PS50043">
    <property type="entry name" value="HTH_LUXR_2"/>
    <property type="match status" value="1"/>
</dbReference>
<dbReference type="PROSITE" id="PS50110">
    <property type="entry name" value="RESPONSE_REGULATORY"/>
    <property type="match status" value="1"/>
</dbReference>
<protein>
    <recommendedName>
        <fullName>Nitrate/nitrite response regulator protein homolog</fullName>
    </recommendedName>
</protein>
<sequence length="208" mass="23079">MQDKLKVLLIDDHPLMRRGIKQLVELDDNFEVVADVSSGTEGISVALQTSPDVIILDLNMKGLSGLDTLKGLRAEGVDARILILTVSDAKNDIYTLIDAGADGYLLKDTEPDTLLEQIKRIAQGEVILSDSIKNLLLERTHEDNPLDSLTDREMGVLRQIATGLSNKQIAAQLFISEETVKVHIRNLLRKLNVHSRVAATVLFFEQNR</sequence>
<keyword id="KW-0010">Activator</keyword>
<keyword id="KW-0067">ATP-binding</keyword>
<keyword id="KW-0238">DNA-binding</keyword>
<keyword id="KW-0547">Nucleotide-binding</keyword>
<keyword id="KW-0597">Phosphoprotein</keyword>
<keyword id="KW-1185">Reference proteome</keyword>
<keyword id="KW-0678">Repressor</keyword>
<keyword id="KW-0804">Transcription</keyword>
<keyword id="KW-0805">Transcription regulation</keyword>
<keyword id="KW-0902">Two-component regulatory system</keyword>
<accession>P44845</accession>